<name>LPXD_RUEPO</name>
<accession>Q5LS40</accession>
<sequence>MSYSISQIAKALGAEAAGNLDLTVTGAAEPGDAGHDQLALAMSPKYAEALAKGGARAAILWPGAAWQAMGLEAAIFAARPRLAMAGLTAMLDPGQGVASGIHPSAVIDPSAEIGADVSIGPLTVVGARARIGAGSVIGPHCVIGMDAVLGEGAWLREMVSIGARATIGARFIAQPGARIGGDGFSFVTPEVSGAENARKTMGDQGEAKAQAWTRIHSLGAVEIGDDVEVGANCTVDNGTIRNTCIGDGSKLDNLVHVGHNTRIGRDCLLCGQTGVSGSVEIGNNVVLGGQTGVVDNIYIGDGVIAGGGSKILSNVPAGRVIMGYPAVKMDLHTEIYKAQRRLPRLLRDISALKKAVSKPGPSE</sequence>
<evidence type="ECO:0000255" key="1">
    <source>
        <dbReference type="HAMAP-Rule" id="MF_00523"/>
    </source>
</evidence>
<feature type="chain" id="PRO_1000050961" description="UDP-3-O-acylglucosamine N-acyltransferase">
    <location>
        <begin position="1"/>
        <end position="363"/>
    </location>
</feature>
<feature type="active site" description="Proton acceptor" evidence="1">
    <location>
        <position position="259"/>
    </location>
</feature>
<reference key="1">
    <citation type="journal article" date="2004" name="Nature">
        <title>Genome sequence of Silicibacter pomeroyi reveals adaptations to the marine environment.</title>
        <authorList>
            <person name="Moran M.A."/>
            <person name="Buchan A."/>
            <person name="Gonzalez J.M."/>
            <person name="Heidelberg J.F."/>
            <person name="Whitman W.B."/>
            <person name="Kiene R.P."/>
            <person name="Henriksen J.R."/>
            <person name="King G.M."/>
            <person name="Belas R."/>
            <person name="Fuqua C."/>
            <person name="Brinkac L.M."/>
            <person name="Lewis M."/>
            <person name="Johri S."/>
            <person name="Weaver B."/>
            <person name="Pai G."/>
            <person name="Eisen J.A."/>
            <person name="Rahe E."/>
            <person name="Sheldon W.M."/>
            <person name="Ye W."/>
            <person name="Miller T.R."/>
            <person name="Carlton J."/>
            <person name="Rasko D.A."/>
            <person name="Paulsen I.T."/>
            <person name="Ren Q."/>
            <person name="Daugherty S.C."/>
            <person name="DeBoy R.T."/>
            <person name="Dodson R.J."/>
            <person name="Durkin A.S."/>
            <person name="Madupu R."/>
            <person name="Nelson W.C."/>
            <person name="Sullivan S.A."/>
            <person name="Rosovitz M.J."/>
            <person name="Haft D.H."/>
            <person name="Selengut J."/>
            <person name="Ward N."/>
        </authorList>
    </citation>
    <scope>NUCLEOTIDE SEQUENCE [LARGE SCALE GENOMIC DNA]</scope>
    <source>
        <strain>ATCC 700808 / DSM 15171 / DSS-3</strain>
    </source>
</reference>
<reference key="2">
    <citation type="journal article" date="2014" name="Stand. Genomic Sci.">
        <title>An updated genome annotation for the model marine bacterium Ruegeria pomeroyi DSS-3.</title>
        <authorList>
            <person name="Rivers A.R."/>
            <person name="Smith C.B."/>
            <person name="Moran M.A."/>
        </authorList>
    </citation>
    <scope>GENOME REANNOTATION</scope>
    <source>
        <strain>ATCC 700808 / DSM 15171 / DSS-3</strain>
    </source>
</reference>
<proteinExistence type="inferred from homology"/>
<comment type="function">
    <text evidence="1">Catalyzes the N-acylation of UDP-3-O-acylglucosamine using 3-hydroxyacyl-ACP as the acyl donor. Is involved in the biosynthesis of lipid A, a phosphorylated glycolipid that anchors the lipopolysaccharide to the outer membrane of the cell.</text>
</comment>
<comment type="catalytic activity">
    <reaction evidence="1">
        <text>a UDP-3-O-[(3R)-3-hydroxyacyl]-alpha-D-glucosamine + a (3R)-hydroxyacyl-[ACP] = a UDP-2-N,3-O-bis[(3R)-3-hydroxyacyl]-alpha-D-glucosamine + holo-[ACP] + H(+)</text>
        <dbReference type="Rhea" id="RHEA:53836"/>
        <dbReference type="Rhea" id="RHEA-COMP:9685"/>
        <dbReference type="Rhea" id="RHEA-COMP:9945"/>
        <dbReference type="ChEBI" id="CHEBI:15378"/>
        <dbReference type="ChEBI" id="CHEBI:64479"/>
        <dbReference type="ChEBI" id="CHEBI:78827"/>
        <dbReference type="ChEBI" id="CHEBI:137740"/>
        <dbReference type="ChEBI" id="CHEBI:137748"/>
        <dbReference type="EC" id="2.3.1.191"/>
    </reaction>
</comment>
<comment type="pathway">
    <text evidence="1">Bacterial outer membrane biogenesis; LPS lipid A biosynthesis.</text>
</comment>
<comment type="subunit">
    <text evidence="1">Homotrimer.</text>
</comment>
<comment type="similarity">
    <text evidence="1">Belongs to the transferase hexapeptide repeat family. LpxD subfamily.</text>
</comment>
<gene>
    <name evidence="1" type="primary">lpxD</name>
    <name type="ordered locus">SPO1930</name>
</gene>
<dbReference type="EC" id="2.3.1.191" evidence="1"/>
<dbReference type="EMBL" id="CP000031">
    <property type="protein sequence ID" value="AAV95206.1"/>
    <property type="molecule type" value="Genomic_DNA"/>
</dbReference>
<dbReference type="RefSeq" id="WP_011047661.1">
    <property type="nucleotide sequence ID" value="NC_003911.12"/>
</dbReference>
<dbReference type="SMR" id="Q5LS40"/>
<dbReference type="STRING" id="246200.SPO1930"/>
<dbReference type="PaxDb" id="246200-SPO1930"/>
<dbReference type="KEGG" id="sil:SPO1930"/>
<dbReference type="eggNOG" id="COG1044">
    <property type="taxonomic scope" value="Bacteria"/>
</dbReference>
<dbReference type="HOGENOM" id="CLU_049865_0_0_5"/>
<dbReference type="OrthoDB" id="9784739at2"/>
<dbReference type="UniPathway" id="UPA00973"/>
<dbReference type="Proteomes" id="UP000001023">
    <property type="component" value="Chromosome"/>
</dbReference>
<dbReference type="GO" id="GO:0016020">
    <property type="term" value="C:membrane"/>
    <property type="evidence" value="ECO:0007669"/>
    <property type="project" value="GOC"/>
</dbReference>
<dbReference type="GO" id="GO:0016410">
    <property type="term" value="F:N-acyltransferase activity"/>
    <property type="evidence" value="ECO:0007669"/>
    <property type="project" value="InterPro"/>
</dbReference>
<dbReference type="GO" id="GO:0009245">
    <property type="term" value="P:lipid A biosynthetic process"/>
    <property type="evidence" value="ECO:0007669"/>
    <property type="project" value="UniProtKB-UniRule"/>
</dbReference>
<dbReference type="CDD" id="cd03352">
    <property type="entry name" value="LbH_LpxD"/>
    <property type="match status" value="1"/>
</dbReference>
<dbReference type="Gene3D" id="2.160.10.10">
    <property type="entry name" value="Hexapeptide repeat proteins"/>
    <property type="match status" value="1"/>
</dbReference>
<dbReference type="Gene3D" id="3.40.1390.10">
    <property type="entry name" value="MurE/MurF, N-terminal domain"/>
    <property type="match status" value="1"/>
</dbReference>
<dbReference type="HAMAP" id="MF_00523">
    <property type="entry name" value="LpxD"/>
    <property type="match status" value="1"/>
</dbReference>
<dbReference type="InterPro" id="IPR001451">
    <property type="entry name" value="Hexapep"/>
</dbReference>
<dbReference type="InterPro" id="IPR018357">
    <property type="entry name" value="Hexapep_transf_CS"/>
</dbReference>
<dbReference type="InterPro" id="IPR007691">
    <property type="entry name" value="LpxD"/>
</dbReference>
<dbReference type="InterPro" id="IPR011004">
    <property type="entry name" value="Trimer_LpxA-like_sf"/>
</dbReference>
<dbReference type="InterPro" id="IPR020573">
    <property type="entry name" value="UDP_GlcNAc_AcTrfase_non-rep"/>
</dbReference>
<dbReference type="NCBIfam" id="TIGR01853">
    <property type="entry name" value="lipid_A_lpxD"/>
    <property type="match status" value="1"/>
</dbReference>
<dbReference type="NCBIfam" id="NF002060">
    <property type="entry name" value="PRK00892.1"/>
    <property type="match status" value="1"/>
</dbReference>
<dbReference type="PANTHER" id="PTHR43378">
    <property type="entry name" value="UDP-3-O-ACYLGLUCOSAMINE N-ACYLTRANSFERASE"/>
    <property type="match status" value="1"/>
</dbReference>
<dbReference type="PANTHER" id="PTHR43378:SF2">
    <property type="entry name" value="UDP-3-O-ACYLGLUCOSAMINE N-ACYLTRANSFERASE 1, MITOCHONDRIAL-RELATED"/>
    <property type="match status" value="1"/>
</dbReference>
<dbReference type="Pfam" id="PF00132">
    <property type="entry name" value="Hexapep"/>
    <property type="match status" value="1"/>
</dbReference>
<dbReference type="Pfam" id="PF04613">
    <property type="entry name" value="LpxD"/>
    <property type="match status" value="1"/>
</dbReference>
<dbReference type="SUPFAM" id="SSF51161">
    <property type="entry name" value="Trimeric LpxA-like enzymes"/>
    <property type="match status" value="1"/>
</dbReference>
<dbReference type="PROSITE" id="PS00101">
    <property type="entry name" value="HEXAPEP_TRANSFERASES"/>
    <property type="match status" value="1"/>
</dbReference>
<protein>
    <recommendedName>
        <fullName evidence="1">UDP-3-O-acylglucosamine N-acyltransferase</fullName>
        <ecNumber evidence="1">2.3.1.191</ecNumber>
    </recommendedName>
</protein>
<organism>
    <name type="scientific">Ruegeria pomeroyi (strain ATCC 700808 / DSM 15171 / DSS-3)</name>
    <name type="common">Silicibacter pomeroyi</name>
    <dbReference type="NCBI Taxonomy" id="246200"/>
    <lineage>
        <taxon>Bacteria</taxon>
        <taxon>Pseudomonadati</taxon>
        <taxon>Pseudomonadota</taxon>
        <taxon>Alphaproteobacteria</taxon>
        <taxon>Rhodobacterales</taxon>
        <taxon>Roseobacteraceae</taxon>
        <taxon>Ruegeria</taxon>
    </lineage>
</organism>
<keyword id="KW-0012">Acyltransferase</keyword>
<keyword id="KW-0441">Lipid A biosynthesis</keyword>
<keyword id="KW-0444">Lipid biosynthesis</keyword>
<keyword id="KW-0443">Lipid metabolism</keyword>
<keyword id="KW-1185">Reference proteome</keyword>
<keyword id="KW-0677">Repeat</keyword>
<keyword id="KW-0808">Transferase</keyword>